<gene>
    <name type="primary">Segment-3</name>
    <name type="synonym">L3</name>
</gene>
<dbReference type="EMBL" id="S68010">
    <property type="protein sequence ID" value="AAB20469.2"/>
    <property type="molecule type" value="Genomic_RNA"/>
</dbReference>
<dbReference type="PIR" id="A43969">
    <property type="entry name" value="A43969"/>
</dbReference>
<dbReference type="SMR" id="P33474"/>
<dbReference type="GO" id="GO:0044423">
    <property type="term" value="C:virion component"/>
    <property type="evidence" value="ECO:0007669"/>
    <property type="project" value="UniProtKB-KW"/>
</dbReference>
<dbReference type="GO" id="GO:0005198">
    <property type="term" value="F:structural molecule activity"/>
    <property type="evidence" value="ECO:0007669"/>
    <property type="project" value="InterPro"/>
</dbReference>
<dbReference type="InterPro" id="IPR002614">
    <property type="entry name" value="Inner_layer_core_VP3_Orbivir"/>
</dbReference>
<dbReference type="InterPro" id="IPR016029">
    <property type="entry name" value="Inner_layer_core_VP3_Reovir"/>
</dbReference>
<dbReference type="Pfam" id="PF01700">
    <property type="entry name" value="Orbi_VP3"/>
    <property type="match status" value="1"/>
</dbReference>
<dbReference type="SUPFAM" id="SSF56831">
    <property type="entry name" value="Reovirus inner layer core protein p3"/>
    <property type="match status" value="1"/>
</dbReference>
<name>VP3_EHDVA</name>
<evidence type="ECO:0000256" key="1">
    <source>
        <dbReference type="SAM" id="MobiDB-lite"/>
    </source>
</evidence>
<evidence type="ECO:0000305" key="2"/>
<feature type="chain" id="PRO_0000222702" description="Core protein VP3">
    <location>
        <begin position="1"/>
        <end position="899"/>
    </location>
</feature>
<feature type="region of interest" description="Disordered" evidence="1">
    <location>
        <begin position="1"/>
        <end position="22"/>
    </location>
</feature>
<accession>P33474</accession>
<comment type="function">
    <text>The VP3 protein is one of the five proteins (with VP1, VP4, VP6 and VP7) which form the inner capsid of the virus.</text>
</comment>
<comment type="subcellular location">
    <subcellularLocation>
        <location evidence="2">Virion</location>
    </subcellularLocation>
</comment>
<comment type="similarity">
    <text evidence="2">Belongs to the orbivirus VP3 family.</text>
</comment>
<sequence>MAEPPDAATPKTSPYLKGDELSSDSGPLLSIFALQEIMQKVRQAKSEYMAATKDVDLTIPDVQKIIDGVKELASETIYKVVNKPLISYRHIVMQSRDRFLRVDTYYERMSEVGDKIDENEPAKFYETVIKKVRHLRTEGAFVLHNIPTRDHRGMEIADPEILGVDVKSILPVLTAEHRAMVQHILDGAIIENGIVATRDVDVYFGACSESVYRIYNRLQGYIEAVQLEELRAAITWLERLGRRKRMTFSQEFLTDFRRADTIWVLALQLPANPRVIWQVPRCSIANLIMNIATCLPTGEYVSPNPRIASITLTQRITTTGPFAILTGSTPTAQQLDDVRKIYLALMFPGQIVLDLKIDPGERMDPAVRMVAGVVGHLMFTAGPRFTNITQNMARQLDIALADFLLYMYNTRIQVQYGPTGEPLDFRIGRGQYDCNAFRTNFQTGAGYNGWGLVDVENREPAPYDHVQRFIRYCNIDSRELIHPATFGIGMNYYCYNEMLRMLVAAGKDTEAAFFRNMLPFHMVRFARINQIINEDLHSAFSMPDDQFNVLLANMIAGAQERMDPVVLDISWISIWYAFNRSFEPTRRNEMLESAPLIESVYASELTVMKIDMQQMALLQRRFPDVLIEARPTHFWKAVMEVSPEPVRAIMDLAHSHSFINIRDMMRWIGLPSMQPSMKLVLEEEAWAVANDFEELMLTDQVYMFRDMLPEPRLDDIERFRQEGFYYTNMLDGPPTIDRVVQYTYEVARLQANMGQLRAALRRIMDEEGWVRFGGVLRTVRVKFFDSRPPEEILQALPFDYQTSEKGGLTYATIKYANDTTIYYLIYNVEYSNLPDSLVLINPTYVMTKVFINKRIVERVRVGQALAVMNKRFIAYKGKMRIMDITQALKVGTKLAAPTV</sequence>
<reference key="1">
    <citation type="journal article" date="1991" name="Virus Res.">
        <title>Phylogenetic analyses of the complete nucleotide sequence of the capsid protein (VP3) of Australian epizootic haemorrhagic disease of deer virus (serotype 2) and cognate genes from other orbiviruses.</title>
        <authorList>
            <person name="Gould A.R."/>
            <person name="Pritchard L.I."/>
        </authorList>
    </citation>
    <scope>NUCLEOTIDE SEQUENCE [GENOMIC RNA]</scope>
</reference>
<proteinExistence type="inferred from homology"/>
<keyword id="KW-0946">Virion</keyword>
<protein>
    <recommendedName>
        <fullName>Core protein VP3</fullName>
    </recommendedName>
</protein>
<organismHost>
    <name type="scientific">Antilocapra americana</name>
    <name type="common">Pronghorn</name>
    <dbReference type="NCBI Taxonomy" id="9891"/>
</organismHost>
<organismHost>
    <name type="scientific">Odocoileus hemionus</name>
    <name type="common">Mule deer</name>
    <name type="synonym">Cervus hemionus</name>
    <dbReference type="NCBI Taxonomy" id="9872"/>
</organismHost>
<organismHost>
    <name type="scientific">Odocoileus virginianus</name>
    <name type="common">White-tailed deer</name>
    <dbReference type="NCBI Taxonomy" id="9874"/>
</organismHost>
<organism>
    <name type="scientific">Epizootic hemorrhagic disease virus 2 (strain Australia)</name>
    <name type="common">EHDV-2</name>
    <dbReference type="NCBI Taxonomy" id="33719"/>
    <lineage>
        <taxon>Viruses</taxon>
        <taxon>Riboviria</taxon>
        <taxon>Orthornavirae</taxon>
        <taxon>Duplornaviricota</taxon>
        <taxon>Resentoviricetes</taxon>
        <taxon>Reovirales</taxon>
        <taxon>Sedoreoviridae</taxon>
        <taxon>Orbivirus</taxon>
        <taxon>Epizootic hemorrhagic disease virus</taxon>
    </lineage>
</organism>